<name>NUOD_GRABC</name>
<keyword id="KW-0997">Cell inner membrane</keyword>
<keyword id="KW-1003">Cell membrane</keyword>
<keyword id="KW-0472">Membrane</keyword>
<keyword id="KW-0520">NAD</keyword>
<keyword id="KW-0874">Quinone</keyword>
<keyword id="KW-1185">Reference proteome</keyword>
<keyword id="KW-1278">Translocase</keyword>
<keyword id="KW-0813">Transport</keyword>
<keyword id="KW-0830">Ubiquinone</keyword>
<gene>
    <name evidence="1" type="primary">nuoD</name>
    <name type="ordered locus">GbCGDNIH1_1299</name>
</gene>
<evidence type="ECO:0000255" key="1">
    <source>
        <dbReference type="HAMAP-Rule" id="MF_01358"/>
    </source>
</evidence>
<reference key="1">
    <citation type="journal article" date="2007" name="J. Bacteriol.">
        <title>Genome sequence analysis of the emerging human pathogenic acetic acid bacterium Granulibacter bethesdensis.</title>
        <authorList>
            <person name="Greenberg D.E."/>
            <person name="Porcella S.F."/>
            <person name="Zelazny A.M."/>
            <person name="Virtaneva K."/>
            <person name="Sturdevant D.E."/>
            <person name="Kupko J.J. III"/>
            <person name="Barbian K.D."/>
            <person name="Babar A."/>
            <person name="Dorward D.W."/>
            <person name="Holland S.M."/>
        </authorList>
    </citation>
    <scope>NUCLEOTIDE SEQUENCE [LARGE SCALE GENOMIC DNA]</scope>
    <source>
        <strain>ATCC BAA-1260 / CGDNIH1</strain>
    </source>
</reference>
<comment type="function">
    <text evidence="1">NDH-1 shuttles electrons from NADH, via FMN and iron-sulfur (Fe-S) centers, to quinones in the respiratory chain. The immediate electron acceptor for the enzyme in this species is believed to be ubiquinone. Couples the redox reaction to proton translocation (for every two electrons transferred, four hydrogen ions are translocated across the cytoplasmic membrane), and thus conserves the redox energy in a proton gradient.</text>
</comment>
<comment type="catalytic activity">
    <reaction evidence="1">
        <text>a quinone + NADH + 5 H(+)(in) = a quinol + NAD(+) + 4 H(+)(out)</text>
        <dbReference type="Rhea" id="RHEA:57888"/>
        <dbReference type="ChEBI" id="CHEBI:15378"/>
        <dbReference type="ChEBI" id="CHEBI:24646"/>
        <dbReference type="ChEBI" id="CHEBI:57540"/>
        <dbReference type="ChEBI" id="CHEBI:57945"/>
        <dbReference type="ChEBI" id="CHEBI:132124"/>
    </reaction>
</comment>
<comment type="subunit">
    <text evidence="1">NDH-1 is composed of 14 different subunits. Subunits NuoB, C, D, E, F, and G constitute the peripheral sector of the complex.</text>
</comment>
<comment type="subcellular location">
    <subcellularLocation>
        <location evidence="1">Cell inner membrane</location>
        <topology evidence="1">Peripheral membrane protein</topology>
        <orientation evidence="1">Cytoplasmic side</orientation>
    </subcellularLocation>
</comment>
<comment type="similarity">
    <text evidence="1">Belongs to the complex I 49 kDa subunit family.</text>
</comment>
<sequence length="400" mass="45223">MSETVQKQGRVVEIDSHAINFGPQHPAAHGVLRLVLELDGEVVERADPHIGLLHRGTEKLIEYKSYLQALPYFDRLDYVSPMCEEHAFALATEKLLGITAPERAQWIRTMFAEITRILNHLLNLTTYALDGGAMTPVLWGHEEREKLLEFHEAVSGARFHANYFRPGGVAKDLPAGLTDRIADWTEKFPAFIDDMAGLLSDNRIWKQRVVDIGRMTPEQALAWGFSGPCIRASGIPWDLRKSQPYDKYADVDFEVPVGRNGDCYDRYLVRVEEMRQSVRIVKQCLGKIRPGPIKVQDHKITPPPRAEMKRSMEALIHHFKLYTEGYHVPEGATYTAVESPKGEFGVYLVSDGSNRPYRCKIRPTGFAHLQAIDVMAHRHMLADAVVIIGSLDLVFGEVDR</sequence>
<organism>
    <name type="scientific">Granulibacter bethesdensis (strain ATCC BAA-1260 / CGDNIH1)</name>
    <dbReference type="NCBI Taxonomy" id="391165"/>
    <lineage>
        <taxon>Bacteria</taxon>
        <taxon>Pseudomonadati</taxon>
        <taxon>Pseudomonadota</taxon>
        <taxon>Alphaproteobacteria</taxon>
        <taxon>Acetobacterales</taxon>
        <taxon>Acetobacteraceae</taxon>
        <taxon>Granulibacter</taxon>
    </lineage>
</organism>
<accession>Q0BSK5</accession>
<proteinExistence type="inferred from homology"/>
<feature type="chain" id="PRO_0000357828" description="NADH-quinone oxidoreductase subunit D">
    <location>
        <begin position="1"/>
        <end position="400"/>
    </location>
</feature>
<dbReference type="EC" id="7.1.1.-" evidence="1"/>
<dbReference type="EMBL" id="CP000394">
    <property type="protein sequence ID" value="ABI62197.1"/>
    <property type="molecule type" value="Genomic_DNA"/>
</dbReference>
<dbReference type="RefSeq" id="WP_011632006.1">
    <property type="nucleotide sequence ID" value="NC_008343.2"/>
</dbReference>
<dbReference type="SMR" id="Q0BSK5"/>
<dbReference type="STRING" id="391165.GbCGDNIH1_1299"/>
<dbReference type="KEGG" id="gbe:GbCGDNIH1_1299"/>
<dbReference type="eggNOG" id="COG0649">
    <property type="taxonomic scope" value="Bacteria"/>
</dbReference>
<dbReference type="HOGENOM" id="CLU_015134_1_1_5"/>
<dbReference type="OrthoDB" id="9801496at2"/>
<dbReference type="Proteomes" id="UP000001963">
    <property type="component" value="Chromosome"/>
</dbReference>
<dbReference type="GO" id="GO:0005886">
    <property type="term" value="C:plasma membrane"/>
    <property type="evidence" value="ECO:0007669"/>
    <property type="project" value="UniProtKB-SubCell"/>
</dbReference>
<dbReference type="GO" id="GO:0051287">
    <property type="term" value="F:NAD binding"/>
    <property type="evidence" value="ECO:0007669"/>
    <property type="project" value="InterPro"/>
</dbReference>
<dbReference type="GO" id="GO:0050136">
    <property type="term" value="F:NADH:ubiquinone reductase (non-electrogenic) activity"/>
    <property type="evidence" value="ECO:0007669"/>
    <property type="project" value="UniProtKB-UniRule"/>
</dbReference>
<dbReference type="GO" id="GO:0048038">
    <property type="term" value="F:quinone binding"/>
    <property type="evidence" value="ECO:0007669"/>
    <property type="project" value="UniProtKB-KW"/>
</dbReference>
<dbReference type="FunFam" id="1.10.645.10:FF:000005">
    <property type="entry name" value="NADH-quinone oxidoreductase subunit D"/>
    <property type="match status" value="1"/>
</dbReference>
<dbReference type="Gene3D" id="1.10.645.10">
    <property type="entry name" value="Cytochrome-c3 Hydrogenase, chain B"/>
    <property type="match status" value="1"/>
</dbReference>
<dbReference type="HAMAP" id="MF_01358">
    <property type="entry name" value="NDH1_NuoD"/>
    <property type="match status" value="1"/>
</dbReference>
<dbReference type="InterPro" id="IPR001135">
    <property type="entry name" value="NADH_Q_OxRdtase_suD"/>
</dbReference>
<dbReference type="InterPro" id="IPR014029">
    <property type="entry name" value="NADH_UbQ_OxRdtase_49kDa_CS"/>
</dbReference>
<dbReference type="InterPro" id="IPR022885">
    <property type="entry name" value="NDH1_su_D/H"/>
</dbReference>
<dbReference type="InterPro" id="IPR029014">
    <property type="entry name" value="NiFe-Hase_large"/>
</dbReference>
<dbReference type="NCBIfam" id="TIGR01962">
    <property type="entry name" value="NuoD"/>
    <property type="match status" value="1"/>
</dbReference>
<dbReference type="NCBIfam" id="NF004739">
    <property type="entry name" value="PRK06075.1"/>
    <property type="match status" value="1"/>
</dbReference>
<dbReference type="PANTHER" id="PTHR11993:SF10">
    <property type="entry name" value="NADH DEHYDROGENASE [UBIQUINONE] IRON-SULFUR PROTEIN 2, MITOCHONDRIAL"/>
    <property type="match status" value="1"/>
</dbReference>
<dbReference type="PANTHER" id="PTHR11993">
    <property type="entry name" value="NADH-UBIQUINONE OXIDOREDUCTASE 49 KDA SUBUNIT"/>
    <property type="match status" value="1"/>
</dbReference>
<dbReference type="Pfam" id="PF00346">
    <property type="entry name" value="Complex1_49kDa"/>
    <property type="match status" value="1"/>
</dbReference>
<dbReference type="SUPFAM" id="SSF56762">
    <property type="entry name" value="HydB/Nqo4-like"/>
    <property type="match status" value="1"/>
</dbReference>
<dbReference type="PROSITE" id="PS00535">
    <property type="entry name" value="COMPLEX1_49K"/>
    <property type="match status" value="1"/>
</dbReference>
<protein>
    <recommendedName>
        <fullName evidence="1">NADH-quinone oxidoreductase subunit D</fullName>
        <ecNumber evidence="1">7.1.1.-</ecNumber>
    </recommendedName>
    <alternativeName>
        <fullName evidence="1">NADH dehydrogenase I subunit D</fullName>
    </alternativeName>
    <alternativeName>
        <fullName evidence="1">NDH-1 subunit D</fullName>
    </alternativeName>
</protein>